<evidence type="ECO:0000255" key="1"/>
<evidence type="ECO:0000305" key="2"/>
<accession>P31084</accession>
<accession>Q5N169</accession>
<proteinExistence type="evidence at protein level"/>
<name>PSAL_SYNP6</name>
<sequence>AQDVIANGGTPEIGDLATPTNSSPFTRTFINALPIYRRGLSSNRRGLEIGMAHGFLLYGPLSILGPLRNTETAGSAGLLATVGLVVILTVCLSLYGNAGSGPSAAESTVTTPNPPQELFTKEGWSEFTSGFILGGLGGAFFAFYLASTPYVQPLVKIAAGVWSVH</sequence>
<reference key="1">
    <citation type="journal article" date="2007" name="Photosyn. Res.">
        <title>Complete nucleotide sequence of the freshwater unicellular cyanobacterium Synechococcus elongatus PCC 6301 chromosome: gene content and organization.</title>
        <authorList>
            <person name="Sugita C."/>
            <person name="Ogata K."/>
            <person name="Shikata M."/>
            <person name="Jikuya H."/>
            <person name="Takano J."/>
            <person name="Furumichi M."/>
            <person name="Kanehisa M."/>
            <person name="Omata T."/>
            <person name="Sugiura M."/>
            <person name="Sugita M."/>
        </authorList>
    </citation>
    <scope>NUCLEOTIDE SEQUENCE [LARGE SCALE GENOMIC DNA]</scope>
    <source>
        <strain>ATCC 27144 / PCC 6301 / SAUG 1402/1</strain>
    </source>
</reference>
<reference key="2">
    <citation type="journal article" date="1991" name="Biochim. Biophys. Acta">
        <title>Polypeptide composition of the Photosystem I complex and the Photosystem I core protein from Synechococcus sp. PCC 6301.</title>
        <authorList>
            <person name="Li N."/>
            <person name="Warren P.V."/>
            <person name="Golbeck J.H."/>
            <person name="Frank G."/>
            <person name="Zuber H."/>
            <person name="Bryant D.A."/>
        </authorList>
    </citation>
    <scope>PROTEIN SEQUENCE OF 1-21</scope>
</reference>
<dbReference type="EMBL" id="AP008231">
    <property type="protein sequence ID" value="BAD79951.1"/>
    <property type="status" value="ALT_FRAME"/>
    <property type="molecule type" value="Genomic_DNA"/>
</dbReference>
<dbReference type="SMR" id="P31084"/>
<dbReference type="KEGG" id="syc:syc1761_d"/>
<dbReference type="eggNOG" id="ENOG502ZMJ2">
    <property type="taxonomic scope" value="Bacteria"/>
</dbReference>
<dbReference type="Proteomes" id="UP000001175">
    <property type="component" value="Chromosome"/>
</dbReference>
<dbReference type="GO" id="GO:0009538">
    <property type="term" value="C:photosystem I reaction center"/>
    <property type="evidence" value="ECO:0007669"/>
    <property type="project" value="InterPro"/>
</dbReference>
<dbReference type="GO" id="GO:0031676">
    <property type="term" value="C:plasma membrane-derived thylakoid membrane"/>
    <property type="evidence" value="ECO:0007669"/>
    <property type="project" value="UniProtKB-SubCell"/>
</dbReference>
<dbReference type="GO" id="GO:0015979">
    <property type="term" value="P:photosynthesis"/>
    <property type="evidence" value="ECO:0007669"/>
    <property type="project" value="UniProtKB-UniRule"/>
</dbReference>
<dbReference type="Gene3D" id="1.20.1240.10">
    <property type="entry name" value="Photosystem I PsaL, reaction centre subunit XI"/>
    <property type="match status" value="1"/>
</dbReference>
<dbReference type="HAMAP" id="MF_00447">
    <property type="entry name" value="PSI_PsaL"/>
    <property type="match status" value="1"/>
</dbReference>
<dbReference type="InterPro" id="IPR003757">
    <property type="entry name" value="PSI_PsaL"/>
</dbReference>
<dbReference type="InterPro" id="IPR036592">
    <property type="entry name" value="PSI_PsaL_sf"/>
</dbReference>
<dbReference type="InterPro" id="IPR022980">
    <property type="entry name" value="PSI_suXI"/>
</dbReference>
<dbReference type="NCBIfam" id="NF001930">
    <property type="entry name" value="PRK00704.2-1"/>
    <property type="match status" value="1"/>
</dbReference>
<dbReference type="PANTHER" id="PTHR34803">
    <property type="entry name" value="PHOTOSYSTEM I REACTION CENTER SUBUNIT XI, CHLOROPLASTIC"/>
    <property type="match status" value="1"/>
</dbReference>
<dbReference type="PANTHER" id="PTHR34803:SF2">
    <property type="entry name" value="PHOTOSYSTEM I REACTION CENTER SUBUNIT XI, CHLOROPLASTIC"/>
    <property type="match status" value="1"/>
</dbReference>
<dbReference type="Pfam" id="PF02605">
    <property type="entry name" value="PsaL"/>
    <property type="match status" value="1"/>
</dbReference>
<dbReference type="SUPFAM" id="SSF81568">
    <property type="entry name" value="Photosystem I reaction center subunit XI, PsaL"/>
    <property type="match status" value="1"/>
</dbReference>
<protein>
    <recommendedName>
        <fullName>Photosystem I reaction center subunit XI</fullName>
    </recommendedName>
    <alternativeName>
        <fullName>PSI subunit V</fullName>
    </alternativeName>
    <alternativeName>
        <fullName>PSI-L</fullName>
    </alternativeName>
</protein>
<organism>
    <name type="scientific">Synechococcus sp. (strain ATCC 27144 / PCC 6301 / SAUG 1402/1)</name>
    <name type="common">Anacystis nidulans</name>
    <dbReference type="NCBI Taxonomy" id="269084"/>
    <lineage>
        <taxon>Bacteria</taxon>
        <taxon>Bacillati</taxon>
        <taxon>Cyanobacteriota</taxon>
        <taxon>Cyanophyceae</taxon>
        <taxon>Synechococcales</taxon>
        <taxon>Synechococcaceae</taxon>
        <taxon>Synechococcus</taxon>
    </lineage>
</organism>
<feature type="chain" id="PRO_0000194701" description="Photosystem I reaction center subunit XI">
    <location>
        <begin position="1"/>
        <end position="165"/>
    </location>
</feature>
<feature type="transmembrane region" description="Helical" evidence="1">
    <location>
        <begin position="49"/>
        <end position="67"/>
    </location>
</feature>
<feature type="transmembrane region" description="Helical" evidence="1">
    <location>
        <begin position="74"/>
        <end position="96"/>
    </location>
</feature>
<feature type="transmembrane region" description="Helical" evidence="1">
    <location>
        <begin position="127"/>
        <end position="146"/>
    </location>
</feature>
<feature type="sequence conflict" description="In Ref. 2; AA sequence." evidence="2" ref="2">
    <original>P</original>
    <variation>A</variation>
    <location>
        <position position="11"/>
    </location>
</feature>
<feature type="sequence conflict" description="In Ref. 2; AA sequence." evidence="2" ref="2">
    <original>D</original>
    <variation>N</variation>
    <location>
        <position position="15"/>
    </location>
</feature>
<feature type="sequence conflict" description="In Ref. 2; AA sequence." evidence="2" ref="2">
    <original>TPT</original>
    <variation>SDK</variation>
    <location>
        <begin position="18"/>
        <end position="20"/>
    </location>
</feature>
<keyword id="KW-0903">Direct protein sequencing</keyword>
<keyword id="KW-0472">Membrane</keyword>
<keyword id="KW-0602">Photosynthesis</keyword>
<keyword id="KW-0603">Photosystem I</keyword>
<keyword id="KW-0793">Thylakoid</keyword>
<keyword id="KW-0812">Transmembrane</keyword>
<keyword id="KW-1133">Transmembrane helix</keyword>
<gene>
    <name type="primary">psaL</name>
    <name type="ordered locus">syc1761_d</name>
</gene>
<comment type="subcellular location">
    <subcellularLocation>
        <location evidence="2">Cellular thylakoid membrane</location>
        <topology evidence="2">Multi-pass membrane protein</topology>
    </subcellularLocation>
</comment>
<comment type="similarity">
    <text evidence="2">Belongs to the PsaL family.</text>
</comment>
<comment type="sequence caution" evidence="2">
    <conflict type="frameshift">
        <sequence resource="EMBL-CDS" id="BAD79951"/>
    </conflict>
</comment>